<dbReference type="EMBL" id="AAFI02000188">
    <property type="protein sequence ID" value="EAL61316.1"/>
    <property type="molecule type" value="Genomic_DNA"/>
</dbReference>
<dbReference type="SMR" id="Q54DI8"/>
<dbReference type="FunCoup" id="Q54DI8">
    <property type="interactions" value="208"/>
</dbReference>
<dbReference type="STRING" id="44689.Q54DI8"/>
<dbReference type="PaxDb" id="44689-DDB0267115"/>
<dbReference type="EnsemblProtists" id="EAL61316">
    <property type="protein sequence ID" value="EAL61316"/>
    <property type="gene ID" value="DDB_G0292212"/>
</dbReference>
<dbReference type="KEGG" id="ddi:DDB_G0292212"/>
<dbReference type="dictyBase" id="DDB_G0292212">
    <property type="gene designation" value="vps26l"/>
</dbReference>
<dbReference type="VEuPathDB" id="AmoebaDB:DDB_G0292212"/>
<dbReference type="eggNOG" id="KOG2717">
    <property type="taxonomic scope" value="Eukaryota"/>
</dbReference>
<dbReference type="HOGENOM" id="CLU_056829_0_0_1"/>
<dbReference type="InParanoid" id="Q54DI8"/>
<dbReference type="OMA" id="CVTMPIT"/>
<dbReference type="PhylomeDB" id="Q54DI8"/>
<dbReference type="PRO" id="PR:Q54DI8"/>
<dbReference type="Proteomes" id="UP000002195">
    <property type="component" value="Chromosome 6"/>
</dbReference>
<dbReference type="GO" id="GO:0005768">
    <property type="term" value="C:endosome"/>
    <property type="evidence" value="ECO:0000318"/>
    <property type="project" value="GO_Central"/>
</dbReference>
<dbReference type="GO" id="GO:0006886">
    <property type="term" value="P:intracellular protein transport"/>
    <property type="evidence" value="ECO:0000318"/>
    <property type="project" value="GO_Central"/>
</dbReference>
<dbReference type="FunFam" id="2.60.40.640:FF:000009">
    <property type="entry name" value="Down syndrome critical region protein 3"/>
    <property type="match status" value="1"/>
</dbReference>
<dbReference type="FunFam" id="2.60.40.640:FF:000024">
    <property type="entry name" value="Down syndrome critical region protein 3"/>
    <property type="match status" value="1"/>
</dbReference>
<dbReference type="Gene3D" id="2.60.40.640">
    <property type="match status" value="2"/>
</dbReference>
<dbReference type="InterPro" id="IPR014752">
    <property type="entry name" value="Arrestin-like_C"/>
</dbReference>
<dbReference type="InterPro" id="IPR014756">
    <property type="entry name" value="Ig_E-set"/>
</dbReference>
<dbReference type="InterPro" id="IPR028934">
    <property type="entry name" value="Vps26-related"/>
</dbReference>
<dbReference type="PANTHER" id="PTHR12233">
    <property type="entry name" value="VACUOLAR PROTEIN SORTING 26 RELATED"/>
    <property type="match status" value="1"/>
</dbReference>
<dbReference type="Pfam" id="PF03643">
    <property type="entry name" value="Vps26"/>
    <property type="match status" value="1"/>
</dbReference>
<dbReference type="SUPFAM" id="SSF81296">
    <property type="entry name" value="E set domains"/>
    <property type="match status" value="1"/>
</dbReference>
<sequence length="304" mass="33939">MNNVLDLKLKKIDKIYRPGSKVSGNVVINSKDDMSHSGVTIVVEGTVQLQLSSKSVGLFEAFYNSLKPITLMHYTISVTNGGGKFQAGITELPFEFTLEPLPNQQLYDTYHGVFVNIQYSIKCDVKRGILSKDLSKTIEFIVEVPSQNKEVLMKSTPESLITFNITPDSLVNFKKISKADVPTFKISGGLVSAICNINEAFQGHMIIESADTVIKSVELQLVRVETCGCADGYAREVTEIQNIQIADGDIWRNFKIPLYMVFPRLFTCISTAGKTFKIEFEVNLVIMLEDGHLITENFPIKLIR</sequence>
<reference key="1">
    <citation type="journal article" date="2005" name="Nature">
        <title>The genome of the social amoeba Dictyostelium discoideum.</title>
        <authorList>
            <person name="Eichinger L."/>
            <person name="Pachebat J.A."/>
            <person name="Gloeckner G."/>
            <person name="Rajandream M.A."/>
            <person name="Sucgang R."/>
            <person name="Berriman M."/>
            <person name="Song J."/>
            <person name="Olsen R."/>
            <person name="Szafranski K."/>
            <person name="Xu Q."/>
            <person name="Tunggal B."/>
            <person name="Kummerfeld S."/>
            <person name="Madera M."/>
            <person name="Konfortov B.A."/>
            <person name="Rivero F."/>
            <person name="Bankier A.T."/>
            <person name="Lehmann R."/>
            <person name="Hamlin N."/>
            <person name="Davies R."/>
            <person name="Gaudet P."/>
            <person name="Fey P."/>
            <person name="Pilcher K."/>
            <person name="Chen G."/>
            <person name="Saunders D."/>
            <person name="Sodergren E.J."/>
            <person name="Davis P."/>
            <person name="Kerhornou A."/>
            <person name="Nie X."/>
            <person name="Hall N."/>
            <person name="Anjard C."/>
            <person name="Hemphill L."/>
            <person name="Bason N."/>
            <person name="Farbrother P."/>
            <person name="Desany B."/>
            <person name="Just E."/>
            <person name="Morio T."/>
            <person name="Rost R."/>
            <person name="Churcher C.M."/>
            <person name="Cooper J."/>
            <person name="Haydock S."/>
            <person name="van Driessche N."/>
            <person name="Cronin A."/>
            <person name="Goodhead I."/>
            <person name="Muzny D.M."/>
            <person name="Mourier T."/>
            <person name="Pain A."/>
            <person name="Lu M."/>
            <person name="Harper D."/>
            <person name="Lindsay R."/>
            <person name="Hauser H."/>
            <person name="James K.D."/>
            <person name="Quiles M."/>
            <person name="Madan Babu M."/>
            <person name="Saito T."/>
            <person name="Buchrieser C."/>
            <person name="Wardroper A."/>
            <person name="Felder M."/>
            <person name="Thangavelu M."/>
            <person name="Johnson D."/>
            <person name="Knights A."/>
            <person name="Loulseged H."/>
            <person name="Mungall K.L."/>
            <person name="Oliver K."/>
            <person name="Price C."/>
            <person name="Quail M.A."/>
            <person name="Urushihara H."/>
            <person name="Hernandez J."/>
            <person name="Rabbinowitsch E."/>
            <person name="Steffen D."/>
            <person name="Sanders M."/>
            <person name="Ma J."/>
            <person name="Kohara Y."/>
            <person name="Sharp S."/>
            <person name="Simmonds M.N."/>
            <person name="Spiegler S."/>
            <person name="Tivey A."/>
            <person name="Sugano S."/>
            <person name="White B."/>
            <person name="Walker D."/>
            <person name="Woodward J.R."/>
            <person name="Winckler T."/>
            <person name="Tanaka Y."/>
            <person name="Shaulsky G."/>
            <person name="Schleicher M."/>
            <person name="Weinstock G.M."/>
            <person name="Rosenthal A."/>
            <person name="Cox E.C."/>
            <person name="Chisholm R.L."/>
            <person name="Gibbs R.A."/>
            <person name="Loomis W.F."/>
            <person name="Platzer M."/>
            <person name="Kay R.R."/>
            <person name="Williams J.G."/>
            <person name="Dear P.H."/>
            <person name="Noegel A.A."/>
            <person name="Barrell B.G."/>
            <person name="Kuspa A."/>
        </authorList>
    </citation>
    <scope>NUCLEOTIDE SEQUENCE [LARGE SCALE GENOMIC DNA]</scope>
    <source>
        <strain>AX4</strain>
    </source>
</reference>
<gene>
    <name type="primary">vps26c</name>
    <name type="ORF">DDB_G0292212</name>
</gene>
<name>VP26C_DICDI</name>
<keyword id="KW-0967">Endosome</keyword>
<keyword id="KW-1185">Reference proteome</keyword>
<protein>
    <recommendedName>
        <fullName evidence="2">Vacuolar protein sorting-associated protein 26C</fullName>
    </recommendedName>
    <alternativeName>
        <fullName>Down syndrome critical region protein 3 homolog</fullName>
    </alternativeName>
    <alternativeName>
        <fullName>Vacuolar protein sorting-associated protein 26-like</fullName>
    </alternativeName>
</protein>
<evidence type="ECO:0000250" key="1">
    <source>
        <dbReference type="UniProtKB" id="O14972"/>
    </source>
</evidence>
<evidence type="ECO:0000305" key="2"/>
<comment type="function">
    <text evidence="1">Component of the commander complex that is essential for endosomal recycling of transmembrane cargos; the commander complex is composed of the CCC subcomplex and the retriever subcomplex (By similarity). Component of the retriever complex, which is a heterotrimeric complex related to retromer cargo-selective complex (CSC) and essential for retromer-independent retrieval and recycling of numerous cargos such as integrin alpha-5/beta-1 (ITGA5:ITGB1) (By similarity). The recruitment of the retriever complex to the endosomal membrane involves CCC and WASH complexes (By similarity). In the endosomes, drives the retriever and recycling of NxxY-motif-containing cargo proteins by coupling to snx17, a cargo essential for the homeostatic maintenance of numerous cell surface proteins associated with processes that include cell migration, cell adhesion, nutrient supply and cell signaling (By similarity).</text>
</comment>
<comment type="subunit">
    <text evidence="1">Component of the commander complex that is essential for endosomal recycling of transmembrane cargos; the commander complex is composed of the CCC subcomplex and the retriever subcomplex (By similarity). Component of the heterotrimeric retriever complex consisting of vps26c, vps29 and vps35l; within the complex interacts with vps35l (By similarity). Interacts with snx17 (via C-terminus); the interaction is direct and associates snx17 with the retriever complex (By similarity). Interacts with snx31; the interaction is direct (By similarity).</text>
</comment>
<comment type="subcellular location">
    <subcellularLocation>
        <location evidence="1">Endosome</location>
    </subcellularLocation>
</comment>
<comment type="similarity">
    <text evidence="2">Belongs to the VPS26 family.</text>
</comment>
<feature type="chain" id="PRO_0000328100" description="Vacuolar protein sorting-associated protein 26C">
    <location>
        <begin position="1"/>
        <end position="304"/>
    </location>
</feature>
<accession>Q54DI8</accession>
<proteinExistence type="inferred from homology"/>
<organism>
    <name type="scientific">Dictyostelium discoideum</name>
    <name type="common">Social amoeba</name>
    <dbReference type="NCBI Taxonomy" id="44689"/>
    <lineage>
        <taxon>Eukaryota</taxon>
        <taxon>Amoebozoa</taxon>
        <taxon>Evosea</taxon>
        <taxon>Eumycetozoa</taxon>
        <taxon>Dictyostelia</taxon>
        <taxon>Dictyosteliales</taxon>
        <taxon>Dictyosteliaceae</taxon>
        <taxon>Dictyostelium</taxon>
    </lineage>
</organism>